<feature type="chain" id="PRO_1000191366" description="Large-conductance mechanosensitive channel">
    <location>
        <begin position="1"/>
        <end position="136"/>
    </location>
</feature>
<feature type="transmembrane region" description="Helical" evidence="1">
    <location>
        <begin position="10"/>
        <end position="30"/>
    </location>
</feature>
<feature type="transmembrane region" description="Helical" evidence="1">
    <location>
        <begin position="76"/>
        <end position="96"/>
    </location>
</feature>
<reference key="1">
    <citation type="journal article" date="2009" name="J. Bacteriol.">
        <title>Complete genome sequence and comparative genome analysis of enteropathogenic Escherichia coli O127:H6 strain E2348/69.</title>
        <authorList>
            <person name="Iguchi A."/>
            <person name="Thomson N.R."/>
            <person name="Ogura Y."/>
            <person name="Saunders D."/>
            <person name="Ooka T."/>
            <person name="Henderson I.R."/>
            <person name="Harris D."/>
            <person name="Asadulghani M."/>
            <person name="Kurokawa K."/>
            <person name="Dean P."/>
            <person name="Kenny B."/>
            <person name="Quail M.A."/>
            <person name="Thurston S."/>
            <person name="Dougan G."/>
            <person name="Hayashi T."/>
            <person name="Parkhill J."/>
            <person name="Frankel G."/>
        </authorList>
    </citation>
    <scope>NUCLEOTIDE SEQUENCE [LARGE SCALE GENOMIC DNA]</scope>
    <source>
        <strain>E2348/69 / EPEC</strain>
    </source>
</reference>
<sequence>MSIIKEFREFAMRGNVVDLAVGVIIGAAFGKIVSSLVADIIMPPLGLLIGGIDFKQFAVTLREAQGDIPAVVMHYGVFIQNVFDFLIVAFAIFMAIKLINKLNRKKEEPAAAPAPTKEEVLLTEIRDLLKEQNNRS</sequence>
<proteinExistence type="inferred from homology"/>
<comment type="function">
    <text evidence="1">Channel that opens in response to stretch forces in the membrane lipid bilayer. May participate in the regulation of osmotic pressure changes within the cell.</text>
</comment>
<comment type="subunit">
    <text evidence="1">Homopentamer.</text>
</comment>
<comment type="subcellular location">
    <subcellularLocation>
        <location evidence="1">Cell inner membrane</location>
        <topology evidence="1">Multi-pass membrane protein</topology>
    </subcellularLocation>
</comment>
<comment type="similarity">
    <text evidence="1">Belongs to the MscL family.</text>
</comment>
<keyword id="KW-0997">Cell inner membrane</keyword>
<keyword id="KW-1003">Cell membrane</keyword>
<keyword id="KW-0407">Ion channel</keyword>
<keyword id="KW-0406">Ion transport</keyword>
<keyword id="KW-0472">Membrane</keyword>
<keyword id="KW-1185">Reference proteome</keyword>
<keyword id="KW-0812">Transmembrane</keyword>
<keyword id="KW-1133">Transmembrane helix</keyword>
<keyword id="KW-0813">Transport</keyword>
<name>MSCL_ECO27</name>
<evidence type="ECO:0000255" key="1">
    <source>
        <dbReference type="HAMAP-Rule" id="MF_00115"/>
    </source>
</evidence>
<dbReference type="EMBL" id="FM180568">
    <property type="protein sequence ID" value="CAS11101.1"/>
    <property type="molecule type" value="Genomic_DNA"/>
</dbReference>
<dbReference type="RefSeq" id="WP_000022449.1">
    <property type="nucleotide sequence ID" value="NC_011601.1"/>
</dbReference>
<dbReference type="SMR" id="B7UK14"/>
<dbReference type="KEGG" id="ecg:E2348C_3553"/>
<dbReference type="HOGENOM" id="CLU_095787_0_0_6"/>
<dbReference type="Proteomes" id="UP000008205">
    <property type="component" value="Chromosome"/>
</dbReference>
<dbReference type="GO" id="GO:0005886">
    <property type="term" value="C:plasma membrane"/>
    <property type="evidence" value="ECO:0007669"/>
    <property type="project" value="UniProtKB-SubCell"/>
</dbReference>
<dbReference type="GO" id="GO:0008381">
    <property type="term" value="F:mechanosensitive monoatomic ion channel activity"/>
    <property type="evidence" value="ECO:0007669"/>
    <property type="project" value="UniProtKB-UniRule"/>
</dbReference>
<dbReference type="FunFam" id="1.10.1200.120:FF:000001">
    <property type="entry name" value="Large-conductance mechanosensitive channel"/>
    <property type="match status" value="1"/>
</dbReference>
<dbReference type="Gene3D" id="1.10.1200.120">
    <property type="entry name" value="Large-conductance mechanosensitive channel, MscL, domain 1"/>
    <property type="match status" value="1"/>
</dbReference>
<dbReference type="HAMAP" id="MF_00115">
    <property type="entry name" value="MscL"/>
    <property type="match status" value="1"/>
</dbReference>
<dbReference type="InterPro" id="IPR019823">
    <property type="entry name" value="Mechanosensitive_channel_CS"/>
</dbReference>
<dbReference type="InterPro" id="IPR001185">
    <property type="entry name" value="MS_channel"/>
</dbReference>
<dbReference type="InterPro" id="IPR037673">
    <property type="entry name" value="MSC/AndL"/>
</dbReference>
<dbReference type="InterPro" id="IPR036019">
    <property type="entry name" value="MscL_channel"/>
</dbReference>
<dbReference type="NCBIfam" id="TIGR00220">
    <property type="entry name" value="mscL"/>
    <property type="match status" value="1"/>
</dbReference>
<dbReference type="NCBIfam" id="NF001841">
    <property type="entry name" value="PRK00567.1-1"/>
    <property type="match status" value="1"/>
</dbReference>
<dbReference type="NCBIfam" id="NF001843">
    <property type="entry name" value="PRK00567.1-4"/>
    <property type="match status" value="1"/>
</dbReference>
<dbReference type="PANTHER" id="PTHR30266:SF2">
    <property type="entry name" value="LARGE-CONDUCTANCE MECHANOSENSITIVE CHANNEL"/>
    <property type="match status" value="1"/>
</dbReference>
<dbReference type="PANTHER" id="PTHR30266">
    <property type="entry name" value="MECHANOSENSITIVE CHANNEL MSCL"/>
    <property type="match status" value="1"/>
</dbReference>
<dbReference type="Pfam" id="PF01741">
    <property type="entry name" value="MscL"/>
    <property type="match status" value="1"/>
</dbReference>
<dbReference type="PRINTS" id="PR01264">
    <property type="entry name" value="MECHCHANNEL"/>
</dbReference>
<dbReference type="SUPFAM" id="SSF81330">
    <property type="entry name" value="Gated mechanosensitive channel"/>
    <property type="match status" value="1"/>
</dbReference>
<dbReference type="PROSITE" id="PS01327">
    <property type="entry name" value="MSCL"/>
    <property type="match status" value="1"/>
</dbReference>
<protein>
    <recommendedName>
        <fullName evidence="1">Large-conductance mechanosensitive channel</fullName>
    </recommendedName>
</protein>
<accession>B7UK14</accession>
<organism>
    <name type="scientific">Escherichia coli O127:H6 (strain E2348/69 / EPEC)</name>
    <dbReference type="NCBI Taxonomy" id="574521"/>
    <lineage>
        <taxon>Bacteria</taxon>
        <taxon>Pseudomonadati</taxon>
        <taxon>Pseudomonadota</taxon>
        <taxon>Gammaproteobacteria</taxon>
        <taxon>Enterobacterales</taxon>
        <taxon>Enterobacteriaceae</taxon>
        <taxon>Escherichia</taxon>
    </lineage>
</organism>
<gene>
    <name evidence="1" type="primary">mscL</name>
    <name type="ordered locus">E2348C_3553</name>
</gene>